<name>CCA_STAAE</name>
<comment type="function">
    <text evidence="1">Catalyzes the addition and repair of the essential 3'-terminal CCA sequence in tRNAs without using a nucleic acid template. Adds these three nucleotides in the order of C, C, and A to the tRNA nucleotide-73, using CTP and ATP as substrates and producing inorganic pyrophosphate. tRNA 3'-terminal CCA addition is required both for tRNA processing and repair. Also involved in tRNA surveillance by mediating tandem CCA addition to generate a CCACCA at the 3' terminus of unstable tRNAs. While stable tRNAs receive only 3'-terminal CCA, unstable tRNAs are marked with CCACCA and rapidly degraded.</text>
</comment>
<comment type="catalytic activity">
    <reaction evidence="1">
        <text>a tRNA precursor + 2 CTP + ATP = a tRNA with a 3' CCA end + 3 diphosphate</text>
        <dbReference type="Rhea" id="RHEA:14433"/>
        <dbReference type="Rhea" id="RHEA-COMP:10465"/>
        <dbReference type="Rhea" id="RHEA-COMP:10468"/>
        <dbReference type="ChEBI" id="CHEBI:30616"/>
        <dbReference type="ChEBI" id="CHEBI:33019"/>
        <dbReference type="ChEBI" id="CHEBI:37563"/>
        <dbReference type="ChEBI" id="CHEBI:74896"/>
        <dbReference type="ChEBI" id="CHEBI:83071"/>
        <dbReference type="EC" id="2.7.7.72"/>
    </reaction>
</comment>
<comment type="catalytic activity">
    <reaction evidence="1">
        <text>a tRNA with a 3' CCA end + 2 CTP + ATP = a tRNA with a 3' CCACCA end + 3 diphosphate</text>
        <dbReference type="Rhea" id="RHEA:76235"/>
        <dbReference type="Rhea" id="RHEA-COMP:10468"/>
        <dbReference type="Rhea" id="RHEA-COMP:18655"/>
        <dbReference type="ChEBI" id="CHEBI:30616"/>
        <dbReference type="ChEBI" id="CHEBI:33019"/>
        <dbReference type="ChEBI" id="CHEBI:37563"/>
        <dbReference type="ChEBI" id="CHEBI:83071"/>
        <dbReference type="ChEBI" id="CHEBI:195187"/>
    </reaction>
    <physiologicalReaction direction="left-to-right" evidence="1">
        <dbReference type="Rhea" id="RHEA:76236"/>
    </physiologicalReaction>
</comment>
<comment type="cofactor">
    <cofactor evidence="1">
        <name>Mg(2+)</name>
        <dbReference type="ChEBI" id="CHEBI:18420"/>
    </cofactor>
</comment>
<comment type="subunit">
    <text evidence="1">Homodimer.</text>
</comment>
<comment type="miscellaneous">
    <text evidence="1">A single active site specifically recognizes both ATP and CTP and is responsible for their addition.</text>
</comment>
<comment type="similarity">
    <text evidence="1">Belongs to the tRNA nucleotidyltransferase/poly(A) polymerase family. Bacterial CCA-adding enzyme type 3 subfamily.</text>
</comment>
<feature type="chain" id="PRO_1000073182" description="CCA-adding enzyme">
    <location>
        <begin position="1"/>
        <end position="400"/>
    </location>
</feature>
<feature type="binding site" evidence="1">
    <location>
        <position position="28"/>
    </location>
    <ligand>
        <name>ATP</name>
        <dbReference type="ChEBI" id="CHEBI:30616"/>
    </ligand>
</feature>
<feature type="binding site" evidence="1">
    <location>
        <position position="28"/>
    </location>
    <ligand>
        <name>CTP</name>
        <dbReference type="ChEBI" id="CHEBI:37563"/>
    </ligand>
</feature>
<feature type="binding site" evidence="1">
    <location>
        <position position="31"/>
    </location>
    <ligand>
        <name>ATP</name>
        <dbReference type="ChEBI" id="CHEBI:30616"/>
    </ligand>
</feature>
<feature type="binding site" evidence="1">
    <location>
        <position position="31"/>
    </location>
    <ligand>
        <name>CTP</name>
        <dbReference type="ChEBI" id="CHEBI:37563"/>
    </ligand>
</feature>
<feature type="binding site" evidence="1">
    <location>
        <position position="41"/>
    </location>
    <ligand>
        <name>Mg(2+)</name>
        <dbReference type="ChEBI" id="CHEBI:18420"/>
    </ligand>
</feature>
<feature type="binding site" evidence="1">
    <location>
        <position position="43"/>
    </location>
    <ligand>
        <name>Mg(2+)</name>
        <dbReference type="ChEBI" id="CHEBI:18420"/>
    </ligand>
</feature>
<feature type="binding site" evidence="1">
    <location>
        <position position="112"/>
    </location>
    <ligand>
        <name>ATP</name>
        <dbReference type="ChEBI" id="CHEBI:30616"/>
    </ligand>
</feature>
<feature type="binding site" evidence="1">
    <location>
        <position position="112"/>
    </location>
    <ligand>
        <name>CTP</name>
        <dbReference type="ChEBI" id="CHEBI:37563"/>
    </ligand>
</feature>
<feature type="binding site" evidence="1">
    <location>
        <position position="155"/>
    </location>
    <ligand>
        <name>ATP</name>
        <dbReference type="ChEBI" id="CHEBI:30616"/>
    </ligand>
</feature>
<feature type="binding site" evidence="1">
    <location>
        <position position="155"/>
    </location>
    <ligand>
        <name>CTP</name>
        <dbReference type="ChEBI" id="CHEBI:37563"/>
    </ligand>
</feature>
<feature type="binding site" evidence="1">
    <location>
        <position position="158"/>
    </location>
    <ligand>
        <name>ATP</name>
        <dbReference type="ChEBI" id="CHEBI:30616"/>
    </ligand>
</feature>
<feature type="binding site" evidence="1">
    <location>
        <position position="158"/>
    </location>
    <ligand>
        <name>CTP</name>
        <dbReference type="ChEBI" id="CHEBI:37563"/>
    </ligand>
</feature>
<feature type="binding site" evidence="1">
    <location>
        <position position="161"/>
    </location>
    <ligand>
        <name>ATP</name>
        <dbReference type="ChEBI" id="CHEBI:30616"/>
    </ligand>
</feature>
<feature type="binding site" evidence="1">
    <location>
        <position position="161"/>
    </location>
    <ligand>
        <name>CTP</name>
        <dbReference type="ChEBI" id="CHEBI:37563"/>
    </ligand>
</feature>
<feature type="binding site" evidence="1">
    <location>
        <position position="164"/>
    </location>
    <ligand>
        <name>ATP</name>
        <dbReference type="ChEBI" id="CHEBI:30616"/>
    </ligand>
</feature>
<feature type="binding site" evidence="1">
    <location>
        <position position="164"/>
    </location>
    <ligand>
        <name>CTP</name>
        <dbReference type="ChEBI" id="CHEBI:37563"/>
    </ligand>
</feature>
<organism>
    <name type="scientific">Staphylococcus aureus (strain Newman)</name>
    <dbReference type="NCBI Taxonomy" id="426430"/>
    <lineage>
        <taxon>Bacteria</taxon>
        <taxon>Bacillati</taxon>
        <taxon>Bacillota</taxon>
        <taxon>Bacilli</taxon>
        <taxon>Bacillales</taxon>
        <taxon>Staphylococcaceae</taxon>
        <taxon>Staphylococcus</taxon>
    </lineage>
</organism>
<keyword id="KW-0067">ATP-binding</keyword>
<keyword id="KW-0460">Magnesium</keyword>
<keyword id="KW-0479">Metal-binding</keyword>
<keyword id="KW-0547">Nucleotide-binding</keyword>
<keyword id="KW-0548">Nucleotidyltransferase</keyword>
<keyword id="KW-0692">RNA repair</keyword>
<keyword id="KW-0694">RNA-binding</keyword>
<keyword id="KW-0808">Transferase</keyword>
<keyword id="KW-0819">tRNA processing</keyword>
<proteinExistence type="inferred from homology"/>
<evidence type="ECO:0000255" key="1">
    <source>
        <dbReference type="HAMAP-Rule" id="MF_01263"/>
    </source>
</evidence>
<gene>
    <name evidence="1" type="primary">cca</name>
    <name type="ordered locus">NWMN_1368</name>
</gene>
<dbReference type="EC" id="2.7.7.72" evidence="1"/>
<dbReference type="EMBL" id="AP009351">
    <property type="protein sequence ID" value="BAF67640.1"/>
    <property type="molecule type" value="Genomic_DNA"/>
</dbReference>
<dbReference type="RefSeq" id="WP_000361544.1">
    <property type="nucleotide sequence ID" value="NZ_JBBIAE010000001.1"/>
</dbReference>
<dbReference type="SMR" id="A6QH08"/>
<dbReference type="KEGG" id="sae:NWMN_1368"/>
<dbReference type="HOGENOM" id="CLU_015961_3_0_9"/>
<dbReference type="Proteomes" id="UP000006386">
    <property type="component" value="Chromosome"/>
</dbReference>
<dbReference type="GO" id="GO:0005524">
    <property type="term" value="F:ATP binding"/>
    <property type="evidence" value="ECO:0007669"/>
    <property type="project" value="UniProtKB-UniRule"/>
</dbReference>
<dbReference type="GO" id="GO:0004810">
    <property type="term" value="F:CCA tRNA nucleotidyltransferase activity"/>
    <property type="evidence" value="ECO:0007669"/>
    <property type="project" value="UniProtKB-UniRule"/>
</dbReference>
<dbReference type="GO" id="GO:0000287">
    <property type="term" value="F:magnesium ion binding"/>
    <property type="evidence" value="ECO:0007669"/>
    <property type="project" value="UniProtKB-UniRule"/>
</dbReference>
<dbReference type="GO" id="GO:0000049">
    <property type="term" value="F:tRNA binding"/>
    <property type="evidence" value="ECO:0007669"/>
    <property type="project" value="UniProtKB-UniRule"/>
</dbReference>
<dbReference type="GO" id="GO:0042245">
    <property type="term" value="P:RNA repair"/>
    <property type="evidence" value="ECO:0007669"/>
    <property type="project" value="UniProtKB-KW"/>
</dbReference>
<dbReference type="GO" id="GO:0001680">
    <property type="term" value="P:tRNA 3'-terminal CCA addition"/>
    <property type="evidence" value="ECO:0007669"/>
    <property type="project" value="UniProtKB-UniRule"/>
</dbReference>
<dbReference type="CDD" id="cd05398">
    <property type="entry name" value="NT_ClassII-CCAase"/>
    <property type="match status" value="1"/>
</dbReference>
<dbReference type="Gene3D" id="1.10.246.80">
    <property type="match status" value="1"/>
</dbReference>
<dbReference type="Gene3D" id="3.30.460.10">
    <property type="entry name" value="Beta Polymerase, domain 2"/>
    <property type="match status" value="1"/>
</dbReference>
<dbReference type="Gene3D" id="1.10.3090.10">
    <property type="entry name" value="cca-adding enzyme, domain 2"/>
    <property type="match status" value="1"/>
</dbReference>
<dbReference type="HAMAP" id="MF_01263">
    <property type="entry name" value="CCA_bact_type3"/>
    <property type="match status" value="1"/>
</dbReference>
<dbReference type="InterPro" id="IPR050264">
    <property type="entry name" value="Bact_CCA-adding_enz_type3_sf"/>
</dbReference>
<dbReference type="InterPro" id="IPR032810">
    <property type="entry name" value="CCA-adding_enz_C"/>
</dbReference>
<dbReference type="InterPro" id="IPR023068">
    <property type="entry name" value="CCA-adding_enz_firmicutes"/>
</dbReference>
<dbReference type="InterPro" id="IPR043519">
    <property type="entry name" value="NT_sf"/>
</dbReference>
<dbReference type="InterPro" id="IPR002646">
    <property type="entry name" value="PolA_pol_head_dom"/>
</dbReference>
<dbReference type="InterPro" id="IPR032828">
    <property type="entry name" value="PolyA_RNA-bd"/>
</dbReference>
<dbReference type="NCBIfam" id="NF009814">
    <property type="entry name" value="PRK13299.1"/>
    <property type="match status" value="1"/>
</dbReference>
<dbReference type="PANTHER" id="PTHR46173">
    <property type="entry name" value="CCA TRNA NUCLEOTIDYLTRANSFERASE 1, MITOCHONDRIAL"/>
    <property type="match status" value="1"/>
</dbReference>
<dbReference type="PANTHER" id="PTHR46173:SF1">
    <property type="entry name" value="CCA TRNA NUCLEOTIDYLTRANSFERASE 1, MITOCHONDRIAL"/>
    <property type="match status" value="1"/>
</dbReference>
<dbReference type="Pfam" id="PF01743">
    <property type="entry name" value="PolyA_pol"/>
    <property type="match status" value="1"/>
</dbReference>
<dbReference type="Pfam" id="PF12627">
    <property type="entry name" value="PolyA_pol_RNAbd"/>
    <property type="match status" value="1"/>
</dbReference>
<dbReference type="Pfam" id="PF13735">
    <property type="entry name" value="tRNA_NucTran2_2"/>
    <property type="match status" value="1"/>
</dbReference>
<dbReference type="SUPFAM" id="SSF81301">
    <property type="entry name" value="Nucleotidyltransferase"/>
    <property type="match status" value="1"/>
</dbReference>
<dbReference type="SUPFAM" id="SSF81891">
    <property type="entry name" value="Poly A polymerase C-terminal region-like"/>
    <property type="match status" value="1"/>
</dbReference>
<sequence length="400" mass="46436">MDKSLFEQARPILEQIQDNGFEAYYVGGSVRDYVMGRNIHDIDITTSATPDEIESIFSHTIPVGKEHGTINVVFNDENYEVTTFRAEEDYVDHRRPSGVTFVRDLYEDLQRRDFTMNAIAMDTAYKLYDYFDGQQDINNRIIRTVGIAEERFQEDALRMIRCLRFQSQLSFDIATETFEAMRIQMADIKFLSIERIVIELTKLMRGINVEKSFNHLKSLKAFNYMPYFEHLDMNQINVTEAIDLELLIAIVSVKFDINYSLKPLKLSNRQVKDINQYIQIMNALPSIITKEQLKMFVYDYDTHLIKNVMVAADVLKANDIQGHEPLIVNLQTIDETLHRLPMHNRKDMMVNGGVLMAHLNAKSGPWLKDVLRQIEIAIVTGKVSNEETEILKWVDNHVKI</sequence>
<protein>
    <recommendedName>
        <fullName evidence="1">CCA-adding enzyme</fullName>
        <ecNumber evidence="1">2.7.7.72</ecNumber>
    </recommendedName>
    <alternativeName>
        <fullName evidence="1">CCA tRNA nucleotidyltransferase</fullName>
    </alternativeName>
    <alternativeName>
        <fullName evidence="1">tRNA CCA-pyrophosphorylase</fullName>
    </alternativeName>
    <alternativeName>
        <fullName evidence="1">tRNA adenylyl-/cytidylyl- transferase</fullName>
    </alternativeName>
    <alternativeName>
        <fullName evidence="1">tRNA nucleotidyltransferase</fullName>
    </alternativeName>
    <alternativeName>
        <fullName evidence="1">tRNA-NT</fullName>
    </alternativeName>
</protein>
<accession>A6QH08</accession>
<reference key="1">
    <citation type="journal article" date="2008" name="J. Bacteriol.">
        <title>Genome sequence of Staphylococcus aureus strain Newman and comparative analysis of staphylococcal genomes: polymorphism and evolution of two major pathogenicity islands.</title>
        <authorList>
            <person name="Baba T."/>
            <person name="Bae T."/>
            <person name="Schneewind O."/>
            <person name="Takeuchi F."/>
            <person name="Hiramatsu K."/>
        </authorList>
    </citation>
    <scope>NUCLEOTIDE SEQUENCE [LARGE SCALE GENOMIC DNA]</scope>
    <source>
        <strain>Newman</strain>
    </source>
</reference>